<comment type="function">
    <text evidence="1">One of the components of the core complex of photosystem II (PSII). PSII is a light-driven water:plastoquinone oxidoreductase that uses light energy to abstract electrons from H(2)O, generating O(2) and a proton gradient subsequently used for ATP formation. It consists of a core antenna complex that captures photons, and an electron transfer chain that converts photonic excitation into a charge separation.</text>
</comment>
<comment type="subunit">
    <text evidence="1">PSII is composed of 1 copy each of membrane proteins PsbA, PsbB, PsbC, PsbD, PsbE, PsbF, PsbH, PsbI, PsbJ, PsbK, PsbL, PsbM, PsbT, PsbX, PsbY, PsbZ, Psb30/Ycf12, at least 3 peripheral proteins of the oxygen-evolving complex and a large number of cofactors. It forms dimeric complexes.</text>
</comment>
<comment type="subcellular location">
    <subcellularLocation>
        <location evidence="1">Plastid</location>
        <location evidence="1">Chloroplast thylakoid membrane</location>
        <topology evidence="1">Single-pass membrane protein</topology>
    </subcellularLocation>
</comment>
<comment type="similarity">
    <text evidence="1">Belongs to the PsbJ family.</text>
</comment>
<keyword id="KW-0150">Chloroplast</keyword>
<keyword id="KW-0472">Membrane</keyword>
<keyword id="KW-0602">Photosynthesis</keyword>
<keyword id="KW-0604">Photosystem II</keyword>
<keyword id="KW-0934">Plastid</keyword>
<keyword id="KW-0674">Reaction center</keyword>
<keyword id="KW-0793">Thylakoid</keyword>
<keyword id="KW-0812">Transmembrane</keyword>
<keyword id="KW-1133">Transmembrane helix</keyword>
<proteinExistence type="inferred from homology"/>
<protein>
    <recommendedName>
        <fullName evidence="1">Photosystem II reaction center protein J</fullName>
        <shortName evidence="1">PSII-J</shortName>
    </recommendedName>
</protein>
<feature type="chain" id="PRO_0000276100" description="Photosystem II reaction center protein J">
    <location>
        <begin position="1"/>
        <end position="40"/>
    </location>
</feature>
<feature type="transmembrane region" description="Helical" evidence="1">
    <location>
        <begin position="8"/>
        <end position="28"/>
    </location>
</feature>
<dbReference type="EMBL" id="AP007232">
    <property type="protein sequence ID" value="BAE47608.1"/>
    <property type="molecule type" value="Genomic_DNA"/>
</dbReference>
<dbReference type="EMBL" id="DQ383816">
    <property type="protein sequence ID" value="ABD47247.1"/>
    <property type="molecule type" value="Genomic_DNA"/>
</dbReference>
<dbReference type="RefSeq" id="YP_398343.1">
    <property type="nucleotide sequence ID" value="NC_007578.1"/>
</dbReference>
<dbReference type="SMR" id="Q332W4"/>
<dbReference type="GeneID" id="3772862"/>
<dbReference type="KEGG" id="lsv:3772862"/>
<dbReference type="GO" id="GO:0009535">
    <property type="term" value="C:chloroplast thylakoid membrane"/>
    <property type="evidence" value="ECO:0007669"/>
    <property type="project" value="UniProtKB-SubCell"/>
</dbReference>
<dbReference type="GO" id="GO:0009539">
    <property type="term" value="C:photosystem II reaction center"/>
    <property type="evidence" value="ECO:0007669"/>
    <property type="project" value="InterPro"/>
</dbReference>
<dbReference type="GO" id="GO:0015979">
    <property type="term" value="P:photosynthesis"/>
    <property type="evidence" value="ECO:0007669"/>
    <property type="project" value="UniProtKB-UniRule"/>
</dbReference>
<dbReference type="Gene3D" id="6.10.250.2070">
    <property type="match status" value="1"/>
</dbReference>
<dbReference type="HAMAP" id="MF_01305">
    <property type="entry name" value="PSII_PsbJ"/>
    <property type="match status" value="1"/>
</dbReference>
<dbReference type="InterPro" id="IPR002682">
    <property type="entry name" value="PSII_PsbJ"/>
</dbReference>
<dbReference type="InterPro" id="IPR037267">
    <property type="entry name" value="PSII_PsbJ_sf"/>
</dbReference>
<dbReference type="NCBIfam" id="NF002722">
    <property type="entry name" value="PRK02565.1"/>
    <property type="match status" value="1"/>
</dbReference>
<dbReference type="PANTHER" id="PTHR34812">
    <property type="entry name" value="PHOTOSYSTEM II REACTION CENTER PROTEIN J"/>
    <property type="match status" value="1"/>
</dbReference>
<dbReference type="PANTHER" id="PTHR34812:SF3">
    <property type="entry name" value="PHOTOSYSTEM II REACTION CENTER PROTEIN J"/>
    <property type="match status" value="1"/>
</dbReference>
<dbReference type="Pfam" id="PF01788">
    <property type="entry name" value="PsbJ"/>
    <property type="match status" value="1"/>
</dbReference>
<dbReference type="SUPFAM" id="SSF161021">
    <property type="entry name" value="Photosystem II reaction center protein J, PsbJ"/>
    <property type="match status" value="1"/>
</dbReference>
<gene>
    <name evidence="1" type="primary">psbJ</name>
</gene>
<reference key="1">
    <citation type="journal article" date="2006" name="Transgenic Res.">
        <title>Efficient and stable transformation of Lactuca sativa L. cv. Cisco (lettuce) plastids.</title>
        <authorList>
            <person name="Kanamoto H."/>
            <person name="Yamashita A."/>
            <person name="Asao H."/>
            <person name="Okumura S."/>
            <person name="Takase H."/>
            <person name="Hattori M."/>
            <person name="Yokota A."/>
            <person name="Tomizawa K."/>
        </authorList>
    </citation>
    <scope>NUCLEOTIDE SEQUENCE [LARGE SCALE GENOMIC DNA]</scope>
    <source>
        <strain>cv. Cisco</strain>
    </source>
</reference>
<reference key="2">
    <citation type="submission" date="2006-01" db="EMBL/GenBank/DDBJ databases">
        <title>A comparison of the first two published chloroplast genomes in Asteraceae: Lactuca and Helianthus.</title>
        <authorList>
            <person name="Timme R.E."/>
            <person name="Kuehl J.V."/>
            <person name="Boore J.L."/>
            <person name="Jansen R.K."/>
        </authorList>
    </citation>
    <scope>NUCLEOTIDE SEQUENCE [LARGE SCALE GENOMIC DNA]</scope>
    <source>
        <strain>cv. Salinas</strain>
    </source>
</reference>
<geneLocation type="chloroplast"/>
<sequence>MADTTGRIPLWIIGTVAGILVIGLVGVFFYGSYSGLGSSL</sequence>
<organism>
    <name type="scientific">Lactuca sativa</name>
    <name type="common">Garden lettuce</name>
    <dbReference type="NCBI Taxonomy" id="4236"/>
    <lineage>
        <taxon>Eukaryota</taxon>
        <taxon>Viridiplantae</taxon>
        <taxon>Streptophyta</taxon>
        <taxon>Embryophyta</taxon>
        <taxon>Tracheophyta</taxon>
        <taxon>Spermatophyta</taxon>
        <taxon>Magnoliopsida</taxon>
        <taxon>eudicotyledons</taxon>
        <taxon>Gunneridae</taxon>
        <taxon>Pentapetalae</taxon>
        <taxon>asterids</taxon>
        <taxon>campanulids</taxon>
        <taxon>Asterales</taxon>
        <taxon>Asteraceae</taxon>
        <taxon>Cichorioideae</taxon>
        <taxon>Cichorieae</taxon>
        <taxon>Lactucinae</taxon>
        <taxon>Lactuca</taxon>
    </lineage>
</organism>
<accession>Q332W4</accession>
<name>PSBJ_LACSA</name>
<evidence type="ECO:0000255" key="1">
    <source>
        <dbReference type="HAMAP-Rule" id="MF_01305"/>
    </source>
</evidence>